<reference key="1">
    <citation type="journal article" date="1996" name="Proc. Natl. Acad. Sci. U.S.A.">
        <title>Molecular cloning of a high-affinity receptor for the growth factor-like lipid mediator lysophosphatidic acid from Xenopus oocytes.</title>
        <authorList>
            <person name="Guo Z."/>
            <person name="Liliom K."/>
            <person name="Fischer D.J."/>
            <person name="Bathurst I.C."/>
            <person name="Tomei L.D."/>
            <person name="Kiefer M.C."/>
            <person name="Tigyi G."/>
        </authorList>
    </citation>
    <scope>NUCLEOTIDE SEQUENCE [MRNA]</scope>
    <source>
        <tissue>Oocyte</tissue>
    </source>
</reference>
<evidence type="ECO:0000255" key="1"/>
<evidence type="ECO:0000255" key="2">
    <source>
        <dbReference type="PROSITE-ProRule" id="PRU00521"/>
    </source>
</evidence>
<keyword id="KW-1003">Cell membrane</keyword>
<keyword id="KW-0297">G-protein coupled receptor</keyword>
<keyword id="KW-0325">Glycoprotein</keyword>
<keyword id="KW-0472">Membrane</keyword>
<keyword id="KW-0675">Receptor</keyword>
<keyword id="KW-1185">Reference proteome</keyword>
<keyword id="KW-0807">Transducer</keyword>
<keyword id="KW-0812">Transmembrane</keyword>
<keyword id="KW-1133">Transmembrane helix</keyword>
<dbReference type="EMBL" id="U76385">
    <property type="protein sequence ID" value="AAB37322.1"/>
    <property type="molecule type" value="mRNA"/>
</dbReference>
<dbReference type="RefSeq" id="NP_001079283.1">
    <property type="nucleotide sequence ID" value="NM_001085814.1"/>
</dbReference>
<dbReference type="SMR" id="P79945"/>
<dbReference type="GeneID" id="378570"/>
<dbReference type="KEGG" id="xla:378570"/>
<dbReference type="AGR" id="Xenbase:XB-GENE-1009032"/>
<dbReference type="CTD" id="378570"/>
<dbReference type="Xenbase" id="XB-GENE-1009032">
    <property type="gene designation" value="gpr45.L"/>
</dbReference>
<dbReference type="OrthoDB" id="10018052at2759"/>
<dbReference type="Proteomes" id="UP000186698">
    <property type="component" value="Chromosome 2L"/>
</dbReference>
<dbReference type="Bgee" id="378570">
    <property type="expression patterns" value="Expressed in egg cell and 17 other cell types or tissues"/>
</dbReference>
<dbReference type="GO" id="GO:0005886">
    <property type="term" value="C:plasma membrane"/>
    <property type="evidence" value="ECO:0007669"/>
    <property type="project" value="UniProtKB-SubCell"/>
</dbReference>
<dbReference type="GO" id="GO:0004930">
    <property type="term" value="F:G protein-coupled receptor activity"/>
    <property type="evidence" value="ECO:0000318"/>
    <property type="project" value="GO_Central"/>
</dbReference>
<dbReference type="GO" id="GO:0007186">
    <property type="term" value="P:G protein-coupled receptor signaling pathway"/>
    <property type="evidence" value="ECO:0000318"/>
    <property type="project" value="GO_Central"/>
</dbReference>
<dbReference type="FunFam" id="1.20.1070.10:FF:000080">
    <property type="entry name" value="probable G-protein coupled receptor 63"/>
    <property type="match status" value="1"/>
</dbReference>
<dbReference type="Gene3D" id="1.20.1070.10">
    <property type="entry name" value="Rhodopsin 7-helix transmembrane proteins"/>
    <property type="match status" value="1"/>
</dbReference>
<dbReference type="InterPro" id="IPR051880">
    <property type="entry name" value="GPC_Orphan_Receptors"/>
</dbReference>
<dbReference type="InterPro" id="IPR000276">
    <property type="entry name" value="GPCR_Rhodpsn"/>
</dbReference>
<dbReference type="InterPro" id="IPR017452">
    <property type="entry name" value="GPCR_Rhodpsn_7TM"/>
</dbReference>
<dbReference type="PANTHER" id="PTHR24245">
    <property type="entry name" value="G-PROTEIN COUPLED RECEPTOR"/>
    <property type="match status" value="1"/>
</dbReference>
<dbReference type="PANTHER" id="PTHR24245:SF4">
    <property type="entry name" value="G-PROTEIN COUPLED RECEPTOR 45-RELATED"/>
    <property type="match status" value="1"/>
</dbReference>
<dbReference type="Pfam" id="PF00001">
    <property type="entry name" value="7tm_1"/>
    <property type="match status" value="1"/>
</dbReference>
<dbReference type="PRINTS" id="PR00237">
    <property type="entry name" value="GPCRRHODOPSN"/>
</dbReference>
<dbReference type="SUPFAM" id="SSF81321">
    <property type="entry name" value="Family A G protein-coupled receptor-like"/>
    <property type="match status" value="1"/>
</dbReference>
<dbReference type="PROSITE" id="PS50262">
    <property type="entry name" value="G_PROTEIN_RECEP_F1_2"/>
    <property type="match status" value="1"/>
</dbReference>
<feature type="chain" id="PRO_0000070086" description="High-affinity lysophosphatidic acid receptor">
    <location>
        <begin position="1"/>
        <end position="372"/>
    </location>
</feature>
<feature type="topological domain" description="Extracellular" evidence="1">
    <location>
        <begin position="1"/>
        <end position="38"/>
    </location>
</feature>
<feature type="transmembrane region" description="Helical; Name=1" evidence="1">
    <location>
        <begin position="39"/>
        <end position="59"/>
    </location>
</feature>
<feature type="topological domain" description="Cytoplasmic" evidence="1">
    <location>
        <begin position="60"/>
        <end position="80"/>
    </location>
</feature>
<feature type="transmembrane region" description="Helical; Name=2" evidence="1">
    <location>
        <begin position="81"/>
        <end position="101"/>
    </location>
</feature>
<feature type="topological domain" description="Extracellular" evidence="1">
    <location>
        <begin position="102"/>
        <end position="108"/>
    </location>
</feature>
<feature type="transmembrane region" description="Helical; Name=3" evidence="1">
    <location>
        <begin position="109"/>
        <end position="129"/>
    </location>
</feature>
<feature type="topological domain" description="Cytoplasmic" evidence="1">
    <location>
        <begin position="130"/>
        <end position="149"/>
    </location>
</feature>
<feature type="transmembrane region" description="Helical; Name=4" evidence="1">
    <location>
        <begin position="150"/>
        <end position="170"/>
    </location>
</feature>
<feature type="topological domain" description="Extracellular" evidence="1">
    <location>
        <begin position="171"/>
        <end position="198"/>
    </location>
</feature>
<feature type="transmembrane region" description="Helical; Name=5" evidence="1">
    <location>
        <begin position="199"/>
        <end position="219"/>
    </location>
</feature>
<feature type="topological domain" description="Cytoplasmic" evidence="1">
    <location>
        <begin position="220"/>
        <end position="268"/>
    </location>
</feature>
<feature type="transmembrane region" description="Helical; Name=6" evidence="1">
    <location>
        <begin position="269"/>
        <end position="289"/>
    </location>
</feature>
<feature type="topological domain" description="Extracellular" evidence="1">
    <location>
        <begin position="290"/>
        <end position="301"/>
    </location>
</feature>
<feature type="transmembrane region" description="Helical; Name=7" evidence="1">
    <location>
        <begin position="302"/>
        <end position="324"/>
    </location>
</feature>
<feature type="topological domain" description="Cytoplasmic" evidence="1">
    <location>
        <begin position="325"/>
        <end position="372"/>
    </location>
</feature>
<feature type="glycosylation site" description="N-linked (GlcNAc...) asparagine" evidence="1">
    <location>
        <position position="4"/>
    </location>
</feature>
<feature type="glycosylation site" description="N-linked (GlcNAc...) asparagine" evidence="1">
    <location>
        <position position="15"/>
    </location>
</feature>
<protein>
    <recommendedName>
        <fullName>High-affinity lysophosphatidic acid receptor</fullName>
    </recommendedName>
    <alternativeName>
        <fullName>PSP24</fullName>
    </alternativeName>
</protein>
<comment type="function">
    <text>Highly selective receptor for lysophosphatidic acid (LPA), a mediator of diverse cellular activities.</text>
</comment>
<comment type="subcellular location">
    <subcellularLocation>
        <location>Cell membrane</location>
        <topology>Multi-pass membrane protein</topology>
    </subcellularLocation>
</comment>
<comment type="tissue specificity">
    <text>Ubiquitously expressed.</text>
</comment>
<comment type="similarity">
    <text evidence="2">Belongs to the G-protein coupled receptor 1 family.</text>
</comment>
<accession>P79945</accession>
<name>PSP24_XENLA</name>
<sequence length="372" mass="42254">MGCNNTALDNCMLPNLSIATAPLDLRFAFSTPLRMLLAIIMILMIAIAFLGNAIVCLIVYQKPAMRSAINLLLATLAFSDIMLSLFCMPFTAVTIITGSWLFGTQFCQISAMLYWFFVLEGVAILLIISVDRFLIIVQRQDKLNPHRAKIMIAASWVLSFCISLPSVVGWTLVEVPTRAPQCVLGYTEFSADRVYAVMLIVAVFFIPFSVMLYSYLCILNTVRRNAVRIHTHADSLCLSQVSKLGLMGLQRPHQMNVDMSFKTRAFTTILILFIGFSLCWLPHSVFSLLSVFSRTFYYSSSFYSISTCTLWLTYLKSVFNPVIYCWRIKKFREACLEFMPKTFKILPNVRGRTRRRIRPSTIYVCGEHQSAV</sequence>
<organism>
    <name type="scientific">Xenopus laevis</name>
    <name type="common">African clawed frog</name>
    <dbReference type="NCBI Taxonomy" id="8355"/>
    <lineage>
        <taxon>Eukaryota</taxon>
        <taxon>Metazoa</taxon>
        <taxon>Chordata</taxon>
        <taxon>Craniata</taxon>
        <taxon>Vertebrata</taxon>
        <taxon>Euteleostomi</taxon>
        <taxon>Amphibia</taxon>
        <taxon>Batrachia</taxon>
        <taxon>Anura</taxon>
        <taxon>Pipoidea</taxon>
        <taxon>Pipidae</taxon>
        <taxon>Xenopodinae</taxon>
        <taxon>Xenopus</taxon>
        <taxon>Xenopus</taxon>
    </lineage>
</organism>
<proteinExistence type="evidence at transcript level"/>